<sequence length="294" mass="31605">MASYGQTCPRPMCIPPSYADLGKAARDIFNKGFGFGLVKLDVKTKSCSGVEFSTSGSSNTDTGKVTGTLETKYKWCEYGLTFTEKWNTDNTLGTEIAIEDQICQGLKLTFDTTFSPNTGKKSGKIKSSYKRECVNLGCDVDFDFAGPAIHGSAVFGYEGWLAGYQMTFDSAKSKLTRNNFAVGYRTGDFQLHTNVNDGTEFGGSIYQKVCEDLDTSVNLAWTSGTNCTRFGIAAKYQLDPTASISAKVNNSSLIGVGYTQTLRPGVKLTLSALVDGKSINAGGHKLGLALELEA</sequence>
<feature type="initiator methionine" description="Removed" evidence="2">
    <location>
        <position position="1"/>
    </location>
</feature>
<feature type="chain" id="PRO_0000050507" description="Non-selective voltage-gated ion channel VDAC2">
    <location>
        <begin position="2"/>
        <end position="294"/>
    </location>
</feature>
<feature type="transmembrane region" description="Beta stranded" evidence="1">
    <location>
        <begin position="37"/>
        <end position="46"/>
    </location>
</feature>
<feature type="transmembrane region" description="Beta stranded" evidence="1">
    <location>
        <begin position="50"/>
        <end position="58"/>
    </location>
</feature>
<feature type="transmembrane region" description="Beta stranded" evidence="1">
    <location>
        <begin position="65"/>
        <end position="75"/>
    </location>
</feature>
<feature type="transmembrane region" description="Beta stranded" evidence="1">
    <location>
        <begin position="80"/>
        <end position="87"/>
    </location>
</feature>
<feature type="transmembrane region" description="Beta stranded" evidence="1">
    <location>
        <begin position="91"/>
        <end position="100"/>
    </location>
</feature>
<feature type="transmembrane region" description="Beta stranded" evidence="1">
    <location>
        <begin position="106"/>
        <end position="115"/>
    </location>
</feature>
<feature type="transmembrane region" description="Beta stranded" evidence="1">
    <location>
        <begin position="122"/>
        <end position="131"/>
    </location>
</feature>
<feature type="transmembrane region" description="Beta stranded" evidence="1">
    <location>
        <begin position="134"/>
        <end position="141"/>
    </location>
</feature>
<feature type="transmembrane region" description="Beta stranded" evidence="1">
    <location>
        <begin position="148"/>
        <end position="156"/>
    </location>
</feature>
<feature type="transmembrane region" description="Beta stranded" evidence="1">
    <location>
        <begin position="161"/>
        <end position="169"/>
    </location>
</feature>
<feature type="transmembrane region" description="Beta stranded" evidence="1">
    <location>
        <begin position="174"/>
        <end position="186"/>
    </location>
</feature>
<feature type="transmembrane region" description="Beta stranded" evidence="1">
    <location>
        <begin position="189"/>
        <end position="196"/>
    </location>
</feature>
<feature type="transmembrane region" description="Beta stranded" evidence="1">
    <location>
        <begin position="200"/>
        <end position="209"/>
    </location>
</feature>
<feature type="transmembrane region" description="Beta stranded" evidence="1">
    <location>
        <begin position="213"/>
        <end position="222"/>
    </location>
</feature>
<feature type="transmembrane region" description="Beta stranded" evidence="1">
    <location>
        <begin position="229"/>
        <end position="238"/>
    </location>
</feature>
<feature type="transmembrane region" description="Beta stranded" evidence="1">
    <location>
        <begin position="242"/>
        <end position="249"/>
    </location>
</feature>
<feature type="transmembrane region" description="Beta stranded" evidence="1">
    <location>
        <begin position="253"/>
        <end position="262"/>
    </location>
</feature>
<feature type="transmembrane region" description="Beta stranded" evidence="1">
    <location>
        <begin position="265"/>
        <end position="274"/>
    </location>
</feature>
<feature type="transmembrane region" description="Beta stranded" evidence="1">
    <location>
        <begin position="284"/>
        <end position="293"/>
    </location>
</feature>
<feature type="binding site" evidence="4">
    <location>
        <position position="23"/>
    </location>
    <ligand>
        <name>ATP</name>
        <dbReference type="ChEBI" id="CHEBI:30616"/>
    </ligand>
</feature>
<feature type="binding site" evidence="4">
    <location>
        <position position="31"/>
    </location>
    <ligand>
        <name>ATP</name>
        <dbReference type="ChEBI" id="CHEBI:30616"/>
    </ligand>
</feature>
<feature type="binding site" evidence="1">
    <location>
        <begin position="253"/>
        <end position="255"/>
    </location>
    <ligand>
        <name>NAD(+)</name>
        <dbReference type="ChEBI" id="CHEBI:57540"/>
    </ligand>
</feature>
<feature type="binding site" evidence="1">
    <location>
        <begin position="271"/>
        <end position="275"/>
    </location>
    <ligand>
        <name>NAD(+)</name>
        <dbReference type="ChEBI" id="CHEBI:57540"/>
    </ligand>
</feature>
<feature type="site" description="Involved in ceramide and phosphatidylcholine binding" evidence="2">
    <location>
        <position position="85"/>
    </location>
</feature>
<feature type="modified residue" description="N-acetylalanine" evidence="2">
    <location>
        <position position="2"/>
    </location>
</feature>
<feature type="modified residue" description="N6-acetyllysine; alternate" evidence="2">
    <location>
        <position position="31"/>
    </location>
</feature>
<feature type="modified residue" description="N6-succinyllysine; alternate" evidence="3">
    <location>
        <position position="31"/>
    </location>
</feature>
<feature type="modified residue" description="Phosphotyrosine" evidence="4">
    <location>
        <position position="78"/>
    </location>
</feature>
<feature type="modified residue" description="Phosphothreonine" evidence="1">
    <location>
        <position position="118"/>
    </location>
</feature>
<feature type="modified residue" description="N6-acetyllysine; alternate" evidence="3">
    <location>
        <position position="120"/>
    </location>
</feature>
<feature type="modified residue" description="Phosphoserine" evidence="1">
    <location>
        <position position="251"/>
    </location>
</feature>
<feature type="modified residue" description="N6-acetyllysine; alternate" evidence="1">
    <location>
        <position position="277"/>
    </location>
</feature>
<feature type="cross-link" description="Glycyl lysine isopeptide (Lys-Gly) (interchain with G-Cter in ubiquitin); alternate" evidence="2">
    <location>
        <position position="31"/>
    </location>
</feature>
<feature type="cross-link" description="Glycyl lysine isopeptide (Lys-Gly) (interchain with G-Cter in ubiquitin)" evidence="2">
    <location>
        <position position="64"/>
    </location>
</feature>
<feature type="cross-link" description="Glycyl lysine isopeptide (Lys-Gly) (interchain with G-Cter in ubiquitin); alternate" evidence="2">
    <location>
        <position position="120"/>
    </location>
</feature>
<feature type="cross-link" description="Glycyl lysine isopeptide (Lys-Gly) (interchain with G-Cter in ubiquitin)" evidence="2">
    <location>
        <position position="121"/>
    </location>
</feature>
<feature type="cross-link" description="Glycyl lysine isopeptide (Lys-Gly) (interchain with G-Cter in ubiquitin)" evidence="1">
    <location>
        <position position="172"/>
    </location>
</feature>
<feature type="cross-link" description="Glycyl lysine isopeptide (Lys-Gly) (interchain with G-Cter in ubiquitin); alternate" evidence="2">
    <location>
        <position position="277"/>
    </location>
</feature>
<feature type="sequence conflict" description="In Ref. 1; AAF78964." evidence="6" ref="1">
    <original>SY</original>
    <variation>TH</variation>
    <location>
        <begin position="3"/>
        <end position="4"/>
    </location>
</feature>
<name>VDAC2_PIG</name>
<accession>Q9MZ15</accession>
<accession>A0A4X1SP14</accession>
<accession>F1S2F6</accession>
<organism>
    <name type="scientific">Sus scrofa</name>
    <name type="common">Pig</name>
    <dbReference type="NCBI Taxonomy" id="9823"/>
    <lineage>
        <taxon>Eukaryota</taxon>
        <taxon>Metazoa</taxon>
        <taxon>Chordata</taxon>
        <taxon>Craniata</taxon>
        <taxon>Vertebrata</taxon>
        <taxon>Euteleostomi</taxon>
        <taxon>Mammalia</taxon>
        <taxon>Eutheria</taxon>
        <taxon>Laurasiatheria</taxon>
        <taxon>Artiodactyla</taxon>
        <taxon>Suina</taxon>
        <taxon>Suidae</taxon>
        <taxon>Sus</taxon>
    </lineage>
</organism>
<gene>
    <name evidence="5" type="primary">VDAC2</name>
</gene>
<comment type="function">
    <text evidence="2 3">Non-selective voltage-gated ion channel that mediates the transport of anions and cations through the mitochondrion outer membrane and plasma membrane (By similarity). The channel adopts an open conformation at zero mV and a closed conformation at both positive and negative potentials (By similarity). There are two populations of channels; the main that functions in a lower open-state conductance with lower ion selectivity, that switch, in a voltage-dependent manner, from the open to a low-conducting 'closed' state and the other that has a normal ion selectivity in the typical high conductance, 'open' state (By similarity). Binds various lipids, including the sphingolipid ceramide, the phospholipid phosphatidylcholine, and the sterols cholesterol and oxysterol (By similarity). Binding of ceramide promotes the mitochondrial outer membrane permeabilization (MOMP) apoptotic pathway (By similarity).</text>
</comment>
<comment type="function">
    <text evidence="2">Catalyzes the scrambling of phospholipids across the outer mitochondrial membrane; the mechanism is unrelated to channel activity and is capable of translocating both anionic and zwitterionic phospholipids.</text>
</comment>
<comment type="catalytic activity">
    <reaction evidence="3">
        <text>chloride(in) = chloride(out)</text>
        <dbReference type="Rhea" id="RHEA:29823"/>
        <dbReference type="ChEBI" id="CHEBI:17996"/>
    </reaction>
</comment>
<comment type="catalytic activity">
    <reaction evidence="3">
        <text>K(+)(in) = K(+)(out)</text>
        <dbReference type="Rhea" id="RHEA:29463"/>
        <dbReference type="ChEBI" id="CHEBI:29103"/>
    </reaction>
</comment>
<comment type="catalytic activity">
    <reaction evidence="2">
        <text>a 1,2-diacyl-sn-glycero-3-phospho-L-serine(in) = a 1,2-diacyl-sn-glycero-3-phospho-L-serine(out)</text>
        <dbReference type="Rhea" id="RHEA:38663"/>
        <dbReference type="ChEBI" id="CHEBI:57262"/>
    </reaction>
</comment>
<comment type="catalytic activity">
    <reaction evidence="2">
        <text>a 1,2-diacyl-sn-glycero-3-phosphocholine(in) = a 1,2-diacyl-sn-glycero-3-phosphocholine(out)</text>
        <dbReference type="Rhea" id="RHEA:38571"/>
        <dbReference type="ChEBI" id="CHEBI:57643"/>
    </reaction>
</comment>
<comment type="catalytic activity">
    <reaction evidence="2">
        <text>a 1,2-diacyl-sn-glycero-3-phospho-(1D-myo-inositol)(in) = a 1,2-diacyl-sn-glycero-3-phospho-(1D-myo-inositol)(out)</text>
        <dbReference type="Rhea" id="RHEA:38691"/>
        <dbReference type="ChEBI" id="CHEBI:57880"/>
    </reaction>
</comment>
<comment type="subunit">
    <text evidence="2 3">Monomer, homodimer and higher order oligomers; formation of higher order structures is necessary for scramblase activity (By similarity). Interacts with ARMC12 in a TBC1D21-dependent manner (By similarity). Interacts with KLC3 (By similarity). Interacts with SPATA33 (By similarity). Interacts with PPP3CC in a SPATA33-dependent manner (By similarity).</text>
</comment>
<comment type="subcellular location">
    <subcellularLocation>
        <location evidence="2">Mitochondrion outer membrane</location>
    </subcellularLocation>
    <subcellularLocation>
        <location evidence="2">Membrane</location>
    </subcellularLocation>
    <text evidence="2">May localize to non-mitochondrial membranes.</text>
</comment>
<comment type="domain">
    <text evidence="1">Consists mainly of a membrane-spanning beta-barrel formed by 19 beta-strands.</text>
</comment>
<comment type="PTM">
    <text evidence="2">Ubiquitinated by PRKN during mitophagy, leading to its degradation and enhancement of mitophagy. Deubiquitinated by USP30.</text>
</comment>
<comment type="similarity">
    <text evidence="6">Belongs to the eukaryotic mitochondrial porin family.</text>
</comment>
<reference key="1">
    <citation type="submission" date="2000-05" db="EMBL/GenBank/DDBJ databases">
        <title>Ion channels in the lens.</title>
        <authorList>
            <person name="Rae J.L."/>
        </authorList>
    </citation>
    <scope>NUCLEOTIDE SEQUENCE [MRNA]</scope>
    <source>
        <tissue>Lens</tissue>
    </source>
</reference>
<reference evidence="9" key="2">
    <citation type="submission" date="2009-11" db="EMBL/GenBank/DDBJ databases">
        <authorList>
            <consortium name="Porcine genome sequencing project"/>
        </authorList>
    </citation>
    <scope>NUCLEOTIDE SEQUENCE [LARGE SCALE GENOMIC DNA]</scope>
    <source>
        <strain evidence="9">Duroc</strain>
    </source>
</reference>
<reference evidence="7 8" key="3">
    <citation type="journal article" date="2019" name="PeerJ">
        <title>Genes of the pig, Sus scrofa, reconstructed with EvidentialGene.</title>
        <authorList>
            <person name="Gilbert D.G."/>
        </authorList>
    </citation>
    <scope>NUCLEOTIDE SEQUENCE [LARGE SCALE GENOMIC DNA]</scope>
</reference>
<keyword id="KW-0002">3D-structure</keyword>
<keyword id="KW-0007">Acetylation</keyword>
<keyword id="KW-0067">ATP-binding</keyword>
<keyword id="KW-0406">Ion transport</keyword>
<keyword id="KW-1017">Isopeptide bond</keyword>
<keyword id="KW-0445">Lipid transport</keyword>
<keyword id="KW-0446">Lipid-binding</keyword>
<keyword id="KW-0472">Membrane</keyword>
<keyword id="KW-0496">Mitochondrion</keyword>
<keyword id="KW-1000">Mitochondrion outer membrane</keyword>
<keyword id="KW-0520">NAD</keyword>
<keyword id="KW-0547">Nucleotide-binding</keyword>
<keyword id="KW-0597">Phosphoprotein</keyword>
<keyword id="KW-0626">Porin</keyword>
<keyword id="KW-1185">Reference proteome</keyword>
<keyword id="KW-0812">Transmembrane</keyword>
<keyword id="KW-1134">Transmembrane beta strand</keyword>
<keyword id="KW-0813">Transport</keyword>
<keyword id="KW-0832">Ubl conjugation</keyword>
<protein>
    <recommendedName>
        <fullName evidence="5">Non-selective voltage-gated ion channel VDAC2</fullName>
        <shortName>VDAC-2</shortName>
    </recommendedName>
</protein>
<proteinExistence type="evidence at protein level"/>
<evidence type="ECO:0000250" key="1">
    <source>
        <dbReference type="UniProtKB" id="P21796"/>
    </source>
</evidence>
<evidence type="ECO:0000250" key="2">
    <source>
        <dbReference type="UniProtKB" id="P45880"/>
    </source>
</evidence>
<evidence type="ECO:0000250" key="3">
    <source>
        <dbReference type="UniProtKB" id="Q60930"/>
    </source>
</evidence>
<evidence type="ECO:0000250" key="4">
    <source>
        <dbReference type="UniProtKB" id="Q60932"/>
    </source>
</evidence>
<evidence type="ECO:0000250" key="5">
    <source>
        <dbReference type="UniProtKB" id="Q9Y5I6"/>
    </source>
</evidence>
<evidence type="ECO:0000305" key="6"/>
<evidence type="ECO:0000312" key="7">
    <source>
        <dbReference type="EMBL" id="HDA83237.1"/>
    </source>
</evidence>
<evidence type="ECO:0000312" key="8">
    <source>
        <dbReference type="EMBL" id="HDB48512.1"/>
    </source>
</evidence>
<evidence type="ECO:0000312" key="9">
    <source>
        <dbReference type="Proteomes" id="UP000008227"/>
    </source>
</evidence>
<dbReference type="EMBL" id="AF268462">
    <property type="protein sequence ID" value="AAF78964.1"/>
    <property type="molecule type" value="mRNA"/>
</dbReference>
<dbReference type="EMBL" id="DQIR01127761">
    <property type="protein sequence ID" value="HDA83237.1"/>
    <property type="molecule type" value="Transcribed_RNA"/>
</dbReference>
<dbReference type="EMBL" id="DQIR01193035">
    <property type="protein sequence ID" value="HDB48512.1"/>
    <property type="molecule type" value="Transcribed_RNA"/>
</dbReference>
<dbReference type="RefSeq" id="NP_999534.1">
    <property type="nucleotide sequence ID" value="NM_214369.1"/>
</dbReference>
<dbReference type="RefSeq" id="XP_020927834.1">
    <property type="nucleotide sequence ID" value="XM_021072175.1"/>
</dbReference>
<dbReference type="PDB" id="7NIE">
    <property type="method" value="EM"/>
    <property type="resolution" value="35.00 A"/>
    <property type="chains" value="C/D/E/F/G/H/I/J/K/L/M/N=1-294"/>
</dbReference>
<dbReference type="PDBsum" id="7NIE"/>
<dbReference type="EMDB" id="EMD-12357"/>
<dbReference type="SMR" id="Q9MZ15"/>
<dbReference type="FunCoup" id="Q9MZ15">
    <property type="interactions" value="2073"/>
</dbReference>
<dbReference type="STRING" id="9823.ENSSSCP00000011005"/>
<dbReference type="iPTMnet" id="Q9MZ15"/>
<dbReference type="PaxDb" id="9823-ENSSSCP00000011005"/>
<dbReference type="PeptideAtlas" id="Q9MZ15"/>
<dbReference type="Ensembl" id="ENSSSCT00000011297.5">
    <property type="protein sequence ID" value="ENSSSCP00000011005.3"/>
    <property type="gene ID" value="ENSSSCG00000010320.5"/>
</dbReference>
<dbReference type="Ensembl" id="ENSSSCT00090028685">
    <property type="protein sequence ID" value="ENSSSCP00090017722"/>
    <property type="gene ID" value="ENSSSCG00090016280"/>
</dbReference>
<dbReference type="Ensembl" id="ENSSSCT00105075107">
    <property type="protein sequence ID" value="ENSSSCP00105053135"/>
    <property type="gene ID" value="ENSSSCG00105039429"/>
</dbReference>
<dbReference type="Ensembl" id="ENSSSCT00110024543">
    <property type="protein sequence ID" value="ENSSSCP00110016608"/>
    <property type="gene ID" value="ENSSSCG00110012790"/>
</dbReference>
<dbReference type="Ensembl" id="ENSSSCT00115037590">
    <property type="protein sequence ID" value="ENSSSCP00115035519"/>
    <property type="gene ID" value="ENSSSCG00115021212"/>
</dbReference>
<dbReference type="Ensembl" id="ENSSSCT00130021761">
    <property type="protein sequence ID" value="ENSSSCP00130014808"/>
    <property type="gene ID" value="ENSSSCG00130011425"/>
</dbReference>
<dbReference type="GeneID" id="397659"/>
<dbReference type="KEGG" id="ssc:397659"/>
<dbReference type="CTD" id="7417"/>
<dbReference type="VGNC" id="VGNC:111154">
    <property type="gene designation" value="VDAC2"/>
</dbReference>
<dbReference type="eggNOG" id="KOG3126">
    <property type="taxonomic scope" value="Eukaryota"/>
</dbReference>
<dbReference type="GeneTree" id="ENSGT00950000182869"/>
<dbReference type="HOGENOM" id="CLU_044399_2_0_1"/>
<dbReference type="InParanoid" id="Q9MZ15"/>
<dbReference type="OMA" id="FKQPAFH"/>
<dbReference type="OrthoDB" id="7827681at2759"/>
<dbReference type="TreeFam" id="TF315091"/>
<dbReference type="Reactome" id="R-SSC-5205685">
    <property type="pathway name" value="PINK1-PRKN Mediated Mitophagy"/>
</dbReference>
<dbReference type="Reactome" id="R-SSC-5689880">
    <property type="pathway name" value="Ub-specific processing proteases"/>
</dbReference>
<dbReference type="Proteomes" id="UP000008227">
    <property type="component" value="Chromosome 14"/>
</dbReference>
<dbReference type="Proteomes" id="UP000314985">
    <property type="component" value="Unplaced"/>
</dbReference>
<dbReference type="Proteomes" id="UP000694570">
    <property type="component" value="Unplaced"/>
</dbReference>
<dbReference type="Proteomes" id="UP000694571">
    <property type="component" value="Unplaced"/>
</dbReference>
<dbReference type="Proteomes" id="UP000694720">
    <property type="component" value="Unplaced"/>
</dbReference>
<dbReference type="Proteomes" id="UP000694722">
    <property type="component" value="Unplaced"/>
</dbReference>
<dbReference type="Proteomes" id="UP000694723">
    <property type="component" value="Unplaced"/>
</dbReference>
<dbReference type="Proteomes" id="UP000694724">
    <property type="component" value="Unplaced"/>
</dbReference>
<dbReference type="Proteomes" id="UP000694725">
    <property type="component" value="Unplaced"/>
</dbReference>
<dbReference type="Proteomes" id="UP000694726">
    <property type="component" value="Unplaced"/>
</dbReference>
<dbReference type="Proteomes" id="UP000694727">
    <property type="component" value="Unplaced"/>
</dbReference>
<dbReference type="Proteomes" id="UP000694728">
    <property type="component" value="Unplaced"/>
</dbReference>
<dbReference type="Bgee" id="ENSSSCG00000010320">
    <property type="expression patterns" value="Expressed in psoas major muscle and 44 other cell types or tissues"/>
</dbReference>
<dbReference type="GO" id="GO:0016020">
    <property type="term" value="C:membrane"/>
    <property type="evidence" value="ECO:0000250"/>
    <property type="project" value="UniProtKB"/>
</dbReference>
<dbReference type="GO" id="GO:0005741">
    <property type="term" value="C:mitochondrial outer membrane"/>
    <property type="evidence" value="ECO:0000250"/>
    <property type="project" value="UniProtKB"/>
</dbReference>
<dbReference type="GO" id="GO:0005739">
    <property type="term" value="C:mitochondrion"/>
    <property type="evidence" value="ECO:0000250"/>
    <property type="project" value="UniProtKB"/>
</dbReference>
<dbReference type="GO" id="GO:0046930">
    <property type="term" value="C:pore complex"/>
    <property type="evidence" value="ECO:0007669"/>
    <property type="project" value="UniProtKB-KW"/>
</dbReference>
<dbReference type="GO" id="GO:0097225">
    <property type="term" value="C:sperm midpiece"/>
    <property type="evidence" value="ECO:0000250"/>
    <property type="project" value="UniProtKB"/>
</dbReference>
<dbReference type="GO" id="GO:0005524">
    <property type="term" value="F:ATP binding"/>
    <property type="evidence" value="ECO:0007669"/>
    <property type="project" value="UniProtKB-KW"/>
</dbReference>
<dbReference type="GO" id="GO:0097001">
    <property type="term" value="F:ceramide binding"/>
    <property type="evidence" value="ECO:0000250"/>
    <property type="project" value="UniProtKB"/>
</dbReference>
<dbReference type="GO" id="GO:0015485">
    <property type="term" value="F:cholesterol binding"/>
    <property type="evidence" value="ECO:0000250"/>
    <property type="project" value="UniProtKB"/>
</dbReference>
<dbReference type="GO" id="GO:0008142">
    <property type="term" value="F:oxysterol binding"/>
    <property type="evidence" value="ECO:0000250"/>
    <property type="project" value="UniProtKB"/>
</dbReference>
<dbReference type="GO" id="GO:0031210">
    <property type="term" value="F:phosphatidylcholine binding"/>
    <property type="evidence" value="ECO:0000250"/>
    <property type="project" value="UniProtKB"/>
</dbReference>
<dbReference type="GO" id="GO:0015288">
    <property type="term" value="F:porin activity"/>
    <property type="evidence" value="ECO:0007669"/>
    <property type="project" value="UniProtKB-KW"/>
</dbReference>
<dbReference type="GO" id="GO:0008308">
    <property type="term" value="F:voltage-gated monoatomic anion channel activity"/>
    <property type="evidence" value="ECO:0000318"/>
    <property type="project" value="GO_Central"/>
</dbReference>
<dbReference type="GO" id="GO:0005244">
    <property type="term" value="F:voltage-gated monoatomic ion channel activity"/>
    <property type="evidence" value="ECO:0000250"/>
    <property type="project" value="UniProtKB"/>
</dbReference>
<dbReference type="GO" id="GO:0006869">
    <property type="term" value="P:lipid transport"/>
    <property type="evidence" value="ECO:0007669"/>
    <property type="project" value="UniProtKB-KW"/>
</dbReference>
<dbReference type="GO" id="GO:0097345">
    <property type="term" value="P:mitochondrial outer membrane permeabilization"/>
    <property type="evidence" value="ECO:0000250"/>
    <property type="project" value="UniProtKB"/>
</dbReference>
<dbReference type="GO" id="GO:0006820">
    <property type="term" value="P:monoatomic anion transport"/>
    <property type="evidence" value="ECO:0000250"/>
    <property type="project" value="UniProtKB"/>
</dbReference>
<dbReference type="CDD" id="cd07306">
    <property type="entry name" value="Porin3_VDAC"/>
    <property type="match status" value="1"/>
</dbReference>
<dbReference type="FunFam" id="2.40.160.10:FF:000001">
    <property type="entry name" value="Voltage-dependent anion-selective channel protein 2"/>
    <property type="match status" value="1"/>
</dbReference>
<dbReference type="Gene3D" id="2.40.160.10">
    <property type="entry name" value="Porin"/>
    <property type="match status" value="1"/>
</dbReference>
<dbReference type="InterPro" id="IPR023614">
    <property type="entry name" value="Porin_dom_sf"/>
</dbReference>
<dbReference type="InterPro" id="IPR001925">
    <property type="entry name" value="Porin_Euk"/>
</dbReference>
<dbReference type="InterPro" id="IPR027246">
    <property type="entry name" value="Porin_Euk/Tom40"/>
</dbReference>
<dbReference type="PANTHER" id="PTHR11743">
    <property type="entry name" value="VOLTAGE-DEPENDENT ANION-SELECTIVE CHANNEL"/>
    <property type="match status" value="1"/>
</dbReference>
<dbReference type="PANTHER" id="PTHR11743:SF12">
    <property type="entry name" value="VOLTAGE-DEPENDENT ANION-SELECTIVE CHANNEL PROTEIN 2"/>
    <property type="match status" value="1"/>
</dbReference>
<dbReference type="Pfam" id="PF01459">
    <property type="entry name" value="Porin_3"/>
    <property type="match status" value="1"/>
</dbReference>
<dbReference type="PRINTS" id="PR00185">
    <property type="entry name" value="EUKARYTPORIN"/>
</dbReference>
<dbReference type="PROSITE" id="PS00558">
    <property type="entry name" value="EUKARYOTIC_PORIN"/>
    <property type="match status" value="1"/>
</dbReference>